<feature type="chain" id="PRO_1000199975" description="Endoribonuclease YbeY">
    <location>
        <begin position="1"/>
        <end position="155"/>
    </location>
</feature>
<feature type="binding site" evidence="1">
    <location>
        <position position="114"/>
    </location>
    <ligand>
        <name>Zn(2+)</name>
        <dbReference type="ChEBI" id="CHEBI:29105"/>
        <note>catalytic</note>
    </ligand>
</feature>
<feature type="binding site" evidence="1">
    <location>
        <position position="118"/>
    </location>
    <ligand>
        <name>Zn(2+)</name>
        <dbReference type="ChEBI" id="CHEBI:29105"/>
        <note>catalytic</note>
    </ligand>
</feature>
<feature type="binding site" evidence="1">
    <location>
        <position position="124"/>
    </location>
    <ligand>
        <name>Zn(2+)</name>
        <dbReference type="ChEBI" id="CHEBI:29105"/>
        <note>catalytic</note>
    </ligand>
</feature>
<proteinExistence type="inferred from homology"/>
<comment type="function">
    <text evidence="1">Single strand-specific metallo-endoribonuclease involved in late-stage 70S ribosome quality control and in maturation of the 3' terminus of the 16S rRNA.</text>
</comment>
<comment type="cofactor">
    <cofactor evidence="1">
        <name>Zn(2+)</name>
        <dbReference type="ChEBI" id="CHEBI:29105"/>
    </cofactor>
    <text evidence="1">Binds 1 zinc ion.</text>
</comment>
<comment type="subcellular location">
    <subcellularLocation>
        <location evidence="1">Cytoplasm</location>
    </subcellularLocation>
</comment>
<comment type="similarity">
    <text evidence="1">Belongs to the endoribonuclease YbeY family.</text>
</comment>
<dbReference type="EC" id="3.1.-.-" evidence="1"/>
<dbReference type="EMBL" id="CU928164">
    <property type="protein sequence ID" value="CAR16763.1"/>
    <property type="molecule type" value="Genomic_DNA"/>
</dbReference>
<dbReference type="RefSeq" id="WP_000084459.1">
    <property type="nucleotide sequence ID" value="NC_011750.1"/>
</dbReference>
<dbReference type="RefSeq" id="YP_002406652.1">
    <property type="nucleotide sequence ID" value="NC_011750.1"/>
</dbReference>
<dbReference type="SMR" id="B7NM10"/>
<dbReference type="STRING" id="585057.ECIAI39_0626"/>
<dbReference type="KEGG" id="ect:ECIAI39_0626"/>
<dbReference type="PATRIC" id="fig|585057.6.peg.667"/>
<dbReference type="HOGENOM" id="CLU_106710_0_1_6"/>
<dbReference type="Proteomes" id="UP000000749">
    <property type="component" value="Chromosome"/>
</dbReference>
<dbReference type="GO" id="GO:0005737">
    <property type="term" value="C:cytoplasm"/>
    <property type="evidence" value="ECO:0007669"/>
    <property type="project" value="UniProtKB-SubCell"/>
</dbReference>
<dbReference type="GO" id="GO:0004222">
    <property type="term" value="F:metalloendopeptidase activity"/>
    <property type="evidence" value="ECO:0007669"/>
    <property type="project" value="InterPro"/>
</dbReference>
<dbReference type="GO" id="GO:0004521">
    <property type="term" value="F:RNA endonuclease activity"/>
    <property type="evidence" value="ECO:0007669"/>
    <property type="project" value="UniProtKB-UniRule"/>
</dbReference>
<dbReference type="GO" id="GO:0008270">
    <property type="term" value="F:zinc ion binding"/>
    <property type="evidence" value="ECO:0007669"/>
    <property type="project" value="UniProtKB-UniRule"/>
</dbReference>
<dbReference type="GO" id="GO:0006364">
    <property type="term" value="P:rRNA processing"/>
    <property type="evidence" value="ECO:0007669"/>
    <property type="project" value="UniProtKB-UniRule"/>
</dbReference>
<dbReference type="FunFam" id="3.40.390.30:FF:000001">
    <property type="entry name" value="Endoribonuclease YbeY"/>
    <property type="match status" value="1"/>
</dbReference>
<dbReference type="Gene3D" id="3.40.390.30">
    <property type="entry name" value="Metalloproteases ('zincins'), catalytic domain"/>
    <property type="match status" value="1"/>
</dbReference>
<dbReference type="HAMAP" id="MF_00009">
    <property type="entry name" value="Endoribonucl_YbeY"/>
    <property type="match status" value="1"/>
</dbReference>
<dbReference type="InterPro" id="IPR023091">
    <property type="entry name" value="MetalPrtase_cat_dom_sf_prd"/>
</dbReference>
<dbReference type="InterPro" id="IPR002036">
    <property type="entry name" value="YbeY"/>
</dbReference>
<dbReference type="InterPro" id="IPR020549">
    <property type="entry name" value="YbeY_CS"/>
</dbReference>
<dbReference type="NCBIfam" id="TIGR00043">
    <property type="entry name" value="rRNA maturation RNase YbeY"/>
    <property type="match status" value="1"/>
</dbReference>
<dbReference type="PANTHER" id="PTHR46986">
    <property type="entry name" value="ENDORIBONUCLEASE YBEY, CHLOROPLASTIC"/>
    <property type="match status" value="1"/>
</dbReference>
<dbReference type="PANTHER" id="PTHR46986:SF1">
    <property type="entry name" value="ENDORIBONUCLEASE YBEY, CHLOROPLASTIC"/>
    <property type="match status" value="1"/>
</dbReference>
<dbReference type="Pfam" id="PF02130">
    <property type="entry name" value="YbeY"/>
    <property type="match status" value="1"/>
</dbReference>
<dbReference type="SUPFAM" id="SSF55486">
    <property type="entry name" value="Metalloproteases ('zincins'), catalytic domain"/>
    <property type="match status" value="1"/>
</dbReference>
<dbReference type="PROSITE" id="PS01306">
    <property type="entry name" value="UPF0054"/>
    <property type="match status" value="1"/>
</dbReference>
<evidence type="ECO:0000255" key="1">
    <source>
        <dbReference type="HAMAP-Rule" id="MF_00009"/>
    </source>
</evidence>
<sequence length="155" mass="17528">MSQVILDLQLACEDNSGLPEESQFQTWLNAVIPQFQEESEVTIRVVDSAESHCLNLTYRGKDKPTNVLSFPFEVPPGMEMSLLGDLVICRQVVEKEAQEQGKPLEAHWAHMVVHGSLHLLGYDHIEDDEAEEMEALETEIMLALGYEDPYIAEKE</sequence>
<keyword id="KW-0963">Cytoplasm</keyword>
<keyword id="KW-0255">Endonuclease</keyword>
<keyword id="KW-0378">Hydrolase</keyword>
<keyword id="KW-0479">Metal-binding</keyword>
<keyword id="KW-0540">Nuclease</keyword>
<keyword id="KW-0690">Ribosome biogenesis</keyword>
<keyword id="KW-0698">rRNA processing</keyword>
<keyword id="KW-0862">Zinc</keyword>
<organism>
    <name type="scientific">Escherichia coli O7:K1 (strain IAI39 / ExPEC)</name>
    <dbReference type="NCBI Taxonomy" id="585057"/>
    <lineage>
        <taxon>Bacteria</taxon>
        <taxon>Pseudomonadati</taxon>
        <taxon>Pseudomonadota</taxon>
        <taxon>Gammaproteobacteria</taxon>
        <taxon>Enterobacterales</taxon>
        <taxon>Enterobacteriaceae</taxon>
        <taxon>Escherichia</taxon>
    </lineage>
</organism>
<accession>B7NM10</accession>
<name>YBEY_ECO7I</name>
<gene>
    <name evidence="1" type="primary">ybeY</name>
    <name type="ordered locus">ECIAI39_0626</name>
</gene>
<protein>
    <recommendedName>
        <fullName evidence="1">Endoribonuclease YbeY</fullName>
        <ecNumber evidence="1">3.1.-.-</ecNumber>
    </recommendedName>
</protein>
<reference key="1">
    <citation type="journal article" date="2009" name="PLoS Genet.">
        <title>Organised genome dynamics in the Escherichia coli species results in highly diverse adaptive paths.</title>
        <authorList>
            <person name="Touchon M."/>
            <person name="Hoede C."/>
            <person name="Tenaillon O."/>
            <person name="Barbe V."/>
            <person name="Baeriswyl S."/>
            <person name="Bidet P."/>
            <person name="Bingen E."/>
            <person name="Bonacorsi S."/>
            <person name="Bouchier C."/>
            <person name="Bouvet O."/>
            <person name="Calteau A."/>
            <person name="Chiapello H."/>
            <person name="Clermont O."/>
            <person name="Cruveiller S."/>
            <person name="Danchin A."/>
            <person name="Diard M."/>
            <person name="Dossat C."/>
            <person name="Karoui M.E."/>
            <person name="Frapy E."/>
            <person name="Garry L."/>
            <person name="Ghigo J.M."/>
            <person name="Gilles A.M."/>
            <person name="Johnson J."/>
            <person name="Le Bouguenec C."/>
            <person name="Lescat M."/>
            <person name="Mangenot S."/>
            <person name="Martinez-Jehanne V."/>
            <person name="Matic I."/>
            <person name="Nassif X."/>
            <person name="Oztas S."/>
            <person name="Petit M.A."/>
            <person name="Pichon C."/>
            <person name="Rouy Z."/>
            <person name="Ruf C.S."/>
            <person name="Schneider D."/>
            <person name="Tourret J."/>
            <person name="Vacherie B."/>
            <person name="Vallenet D."/>
            <person name="Medigue C."/>
            <person name="Rocha E.P.C."/>
            <person name="Denamur E."/>
        </authorList>
    </citation>
    <scope>NUCLEOTIDE SEQUENCE [LARGE SCALE GENOMIC DNA]</scope>
    <source>
        <strain>IAI39 / ExPEC</strain>
    </source>
</reference>